<comment type="function">
    <text evidence="1">ATP-dependent specificity component of the Clp protease. It directs the protease to specific substrates. Can perform chaperone functions in the absence of ClpP.</text>
</comment>
<comment type="subunit">
    <text evidence="1">Component of the ClpX-ClpP complex. Forms a hexameric ring that, in the presence of ATP, binds to fourteen ClpP subunits assembled into a disk-like structure with a central cavity, resembling the structure of eukaryotic proteasomes.</text>
</comment>
<comment type="similarity">
    <text evidence="1">Belongs to the ClpX chaperone family.</text>
</comment>
<evidence type="ECO:0000255" key="1">
    <source>
        <dbReference type="HAMAP-Rule" id="MF_00175"/>
    </source>
</evidence>
<evidence type="ECO:0000255" key="2">
    <source>
        <dbReference type="PROSITE-ProRule" id="PRU01250"/>
    </source>
</evidence>
<sequence>MTDKRKDGSGKLLYCSFCGKSQHEVRKLIAGPSVYICDECVDLCNDIIREEIKEVAPHRERSALPTPHEIRTHLDDYVIGQEQAKKVLAVAVYNHYKRLRNGDTSNGVELGKSNILLIGPTGSGKTLLAETLARLLDVPFTMADATTLTEAGYVGEDVENIIQKLLQKCDYDVQKAQRGIVYIDEIDKISRKSDNPSITRDVSGEGVQQALLKLIEGTVAAVPPQGGRKHPQQEFLQVDTSKILFICGGAFAGLDKVIANRVETGSGIGFGATVKAKSDKASEGELLSQVEPEDLIKFGLIPEFIGRLPVVATLNELSEEALIQILKEPKNALTKQYQALFNLEGVDLEFRDEALDAIARKAMARKTGARGLRSIVEAALLDTMYDLPSMEDVEKVVIDESVIAGQSKPLLIYGKPEAQASGE</sequence>
<gene>
    <name evidence="1" type="primary">clpX</name>
    <name type="ordered locus">SeAg_B0489</name>
</gene>
<feature type="chain" id="PRO_1000097993" description="ATP-dependent Clp protease ATP-binding subunit ClpX">
    <location>
        <begin position="1"/>
        <end position="423"/>
    </location>
</feature>
<feature type="domain" description="ClpX-type ZB" evidence="2">
    <location>
        <begin position="2"/>
        <end position="56"/>
    </location>
</feature>
<feature type="binding site" evidence="2">
    <location>
        <position position="15"/>
    </location>
    <ligand>
        <name>Zn(2+)</name>
        <dbReference type="ChEBI" id="CHEBI:29105"/>
    </ligand>
</feature>
<feature type="binding site" evidence="2">
    <location>
        <position position="18"/>
    </location>
    <ligand>
        <name>Zn(2+)</name>
        <dbReference type="ChEBI" id="CHEBI:29105"/>
    </ligand>
</feature>
<feature type="binding site" evidence="2">
    <location>
        <position position="37"/>
    </location>
    <ligand>
        <name>Zn(2+)</name>
        <dbReference type="ChEBI" id="CHEBI:29105"/>
    </ligand>
</feature>
<feature type="binding site" evidence="2">
    <location>
        <position position="40"/>
    </location>
    <ligand>
        <name>Zn(2+)</name>
        <dbReference type="ChEBI" id="CHEBI:29105"/>
    </ligand>
</feature>
<feature type="binding site" evidence="1">
    <location>
        <begin position="120"/>
        <end position="127"/>
    </location>
    <ligand>
        <name>ATP</name>
        <dbReference type="ChEBI" id="CHEBI:30616"/>
    </ligand>
</feature>
<name>CLPX_SALA4</name>
<proteinExistence type="inferred from homology"/>
<organism>
    <name type="scientific">Salmonella agona (strain SL483)</name>
    <dbReference type="NCBI Taxonomy" id="454166"/>
    <lineage>
        <taxon>Bacteria</taxon>
        <taxon>Pseudomonadati</taxon>
        <taxon>Pseudomonadota</taxon>
        <taxon>Gammaproteobacteria</taxon>
        <taxon>Enterobacterales</taxon>
        <taxon>Enterobacteriaceae</taxon>
        <taxon>Salmonella</taxon>
    </lineage>
</organism>
<accession>B5EXI9</accession>
<dbReference type="EMBL" id="CP001138">
    <property type="protein sequence ID" value="ACH51872.1"/>
    <property type="molecule type" value="Genomic_DNA"/>
</dbReference>
<dbReference type="RefSeq" id="WP_000130314.1">
    <property type="nucleotide sequence ID" value="NC_011149.1"/>
</dbReference>
<dbReference type="SMR" id="B5EXI9"/>
<dbReference type="KEGG" id="sea:SeAg_B0489"/>
<dbReference type="HOGENOM" id="CLU_014218_8_2_6"/>
<dbReference type="Proteomes" id="UP000008819">
    <property type="component" value="Chromosome"/>
</dbReference>
<dbReference type="GO" id="GO:0009376">
    <property type="term" value="C:HslUV protease complex"/>
    <property type="evidence" value="ECO:0007669"/>
    <property type="project" value="TreeGrafter"/>
</dbReference>
<dbReference type="GO" id="GO:0005524">
    <property type="term" value="F:ATP binding"/>
    <property type="evidence" value="ECO:0007669"/>
    <property type="project" value="UniProtKB-UniRule"/>
</dbReference>
<dbReference type="GO" id="GO:0016887">
    <property type="term" value="F:ATP hydrolysis activity"/>
    <property type="evidence" value="ECO:0007669"/>
    <property type="project" value="InterPro"/>
</dbReference>
<dbReference type="GO" id="GO:0140662">
    <property type="term" value="F:ATP-dependent protein folding chaperone"/>
    <property type="evidence" value="ECO:0007669"/>
    <property type="project" value="InterPro"/>
</dbReference>
<dbReference type="GO" id="GO:0046983">
    <property type="term" value="F:protein dimerization activity"/>
    <property type="evidence" value="ECO:0007669"/>
    <property type="project" value="InterPro"/>
</dbReference>
<dbReference type="GO" id="GO:0051082">
    <property type="term" value="F:unfolded protein binding"/>
    <property type="evidence" value="ECO:0007669"/>
    <property type="project" value="UniProtKB-UniRule"/>
</dbReference>
<dbReference type="GO" id="GO:0008270">
    <property type="term" value="F:zinc ion binding"/>
    <property type="evidence" value="ECO:0007669"/>
    <property type="project" value="InterPro"/>
</dbReference>
<dbReference type="GO" id="GO:0051301">
    <property type="term" value="P:cell division"/>
    <property type="evidence" value="ECO:0007669"/>
    <property type="project" value="TreeGrafter"/>
</dbReference>
<dbReference type="GO" id="GO:0051603">
    <property type="term" value="P:proteolysis involved in protein catabolic process"/>
    <property type="evidence" value="ECO:0007669"/>
    <property type="project" value="TreeGrafter"/>
</dbReference>
<dbReference type="CDD" id="cd19497">
    <property type="entry name" value="RecA-like_ClpX"/>
    <property type="match status" value="1"/>
</dbReference>
<dbReference type="FunFam" id="1.10.8.60:FF:000002">
    <property type="entry name" value="ATP-dependent Clp protease ATP-binding subunit ClpX"/>
    <property type="match status" value="1"/>
</dbReference>
<dbReference type="FunFam" id="3.40.50.300:FF:000005">
    <property type="entry name" value="ATP-dependent Clp protease ATP-binding subunit ClpX"/>
    <property type="match status" value="1"/>
</dbReference>
<dbReference type="Gene3D" id="1.10.8.60">
    <property type="match status" value="1"/>
</dbReference>
<dbReference type="Gene3D" id="6.20.220.10">
    <property type="entry name" value="ClpX chaperone, C4-type zinc finger domain"/>
    <property type="match status" value="1"/>
</dbReference>
<dbReference type="Gene3D" id="3.40.50.300">
    <property type="entry name" value="P-loop containing nucleotide triphosphate hydrolases"/>
    <property type="match status" value="1"/>
</dbReference>
<dbReference type="HAMAP" id="MF_00175">
    <property type="entry name" value="ClpX"/>
    <property type="match status" value="1"/>
</dbReference>
<dbReference type="InterPro" id="IPR003593">
    <property type="entry name" value="AAA+_ATPase"/>
</dbReference>
<dbReference type="InterPro" id="IPR050052">
    <property type="entry name" value="ATP-dep_Clp_protease_ClpX"/>
</dbReference>
<dbReference type="InterPro" id="IPR003959">
    <property type="entry name" value="ATPase_AAA_core"/>
</dbReference>
<dbReference type="InterPro" id="IPR019489">
    <property type="entry name" value="Clp_ATPase_C"/>
</dbReference>
<dbReference type="InterPro" id="IPR004487">
    <property type="entry name" value="Clp_protease_ATP-bd_su_ClpX"/>
</dbReference>
<dbReference type="InterPro" id="IPR046425">
    <property type="entry name" value="ClpX_bact"/>
</dbReference>
<dbReference type="InterPro" id="IPR027417">
    <property type="entry name" value="P-loop_NTPase"/>
</dbReference>
<dbReference type="InterPro" id="IPR010603">
    <property type="entry name" value="Znf_CppX_C4"/>
</dbReference>
<dbReference type="InterPro" id="IPR038366">
    <property type="entry name" value="Znf_CppX_C4_sf"/>
</dbReference>
<dbReference type="NCBIfam" id="TIGR00382">
    <property type="entry name" value="clpX"/>
    <property type="match status" value="1"/>
</dbReference>
<dbReference type="NCBIfam" id="NF003745">
    <property type="entry name" value="PRK05342.1"/>
    <property type="match status" value="1"/>
</dbReference>
<dbReference type="PANTHER" id="PTHR48102:SF7">
    <property type="entry name" value="ATP-DEPENDENT CLP PROTEASE ATP-BINDING SUBUNIT CLPX-LIKE, MITOCHONDRIAL"/>
    <property type="match status" value="1"/>
</dbReference>
<dbReference type="PANTHER" id="PTHR48102">
    <property type="entry name" value="ATP-DEPENDENT CLP PROTEASE ATP-BINDING SUBUNIT CLPX-LIKE, MITOCHONDRIAL-RELATED"/>
    <property type="match status" value="1"/>
</dbReference>
<dbReference type="Pfam" id="PF07724">
    <property type="entry name" value="AAA_2"/>
    <property type="match status" value="1"/>
</dbReference>
<dbReference type="Pfam" id="PF10431">
    <property type="entry name" value="ClpB_D2-small"/>
    <property type="match status" value="1"/>
</dbReference>
<dbReference type="Pfam" id="PF06689">
    <property type="entry name" value="zf-C4_ClpX"/>
    <property type="match status" value="1"/>
</dbReference>
<dbReference type="SMART" id="SM00382">
    <property type="entry name" value="AAA"/>
    <property type="match status" value="1"/>
</dbReference>
<dbReference type="SMART" id="SM01086">
    <property type="entry name" value="ClpB_D2-small"/>
    <property type="match status" value="1"/>
</dbReference>
<dbReference type="SMART" id="SM00994">
    <property type="entry name" value="zf-C4_ClpX"/>
    <property type="match status" value="1"/>
</dbReference>
<dbReference type="SUPFAM" id="SSF57716">
    <property type="entry name" value="Glucocorticoid receptor-like (DNA-binding domain)"/>
    <property type="match status" value="1"/>
</dbReference>
<dbReference type="SUPFAM" id="SSF52540">
    <property type="entry name" value="P-loop containing nucleoside triphosphate hydrolases"/>
    <property type="match status" value="1"/>
</dbReference>
<dbReference type="PROSITE" id="PS51902">
    <property type="entry name" value="CLPX_ZB"/>
    <property type="match status" value="1"/>
</dbReference>
<protein>
    <recommendedName>
        <fullName evidence="1">ATP-dependent Clp protease ATP-binding subunit ClpX</fullName>
    </recommendedName>
</protein>
<keyword id="KW-0067">ATP-binding</keyword>
<keyword id="KW-0143">Chaperone</keyword>
<keyword id="KW-0479">Metal-binding</keyword>
<keyword id="KW-0547">Nucleotide-binding</keyword>
<keyword id="KW-0862">Zinc</keyword>
<reference key="1">
    <citation type="journal article" date="2011" name="J. Bacteriol.">
        <title>Comparative genomics of 28 Salmonella enterica isolates: evidence for CRISPR-mediated adaptive sublineage evolution.</title>
        <authorList>
            <person name="Fricke W.F."/>
            <person name="Mammel M.K."/>
            <person name="McDermott P.F."/>
            <person name="Tartera C."/>
            <person name="White D.G."/>
            <person name="Leclerc J.E."/>
            <person name="Ravel J."/>
            <person name="Cebula T.A."/>
        </authorList>
    </citation>
    <scope>NUCLEOTIDE SEQUENCE [LARGE SCALE GENOMIC DNA]</scope>
    <source>
        <strain>SL483</strain>
    </source>
</reference>